<proteinExistence type="inferred from homology"/>
<reference key="1">
    <citation type="submission" date="2004-12" db="EMBL/GenBank/DDBJ databases">
        <title>The genome sequence of Borrelia hermsii and Borrelia turicatae: comparative analysis of two agents of endemic N. America relapsing fever.</title>
        <authorList>
            <person name="Porcella S.F."/>
            <person name="Raffel S.J."/>
            <person name="Schrumpf M.E."/>
            <person name="Montgomery B."/>
            <person name="Smith T."/>
            <person name="Schwan T.G."/>
        </authorList>
    </citation>
    <scope>NUCLEOTIDE SEQUENCE [LARGE SCALE GENOMIC DNA]</scope>
    <source>
        <strain>HS1 / DAH</strain>
    </source>
</reference>
<organism>
    <name type="scientific">Borrelia hermsii (strain HS1 / DAH)</name>
    <dbReference type="NCBI Taxonomy" id="314723"/>
    <lineage>
        <taxon>Bacteria</taxon>
        <taxon>Pseudomonadati</taxon>
        <taxon>Spirochaetota</taxon>
        <taxon>Spirochaetia</taxon>
        <taxon>Spirochaetales</taxon>
        <taxon>Borreliaceae</taxon>
        <taxon>Borrelia</taxon>
    </lineage>
</organism>
<sequence>MIEDVEDEILRLKNIIKRWNREYYVDSSPSVGDLTYDKALLRLQDLESKYPEYKTLDSPTFRFGSDLLNDFEEVKHSFPILSLDKTYDIKGLSLWIEKMVLESAISGLHTGISVEPKIDGCSIVLHYKDGILEKALTRGDGRVGNDVTENVKTIRNVPLRIDEKIELVLRGEIYITKENFLKINRTLKNPYVNARNLASGILRRISSKEVANFPLDIFVYDILYSSLKLNTSHDAFDKLKQFGFKVNPFCEFFGGKNLEAGIIAHVKKIEALRDSFEYEIDGVVLKIDSFILRKILGSTSHHPKWSIAYKFESCTGMSKVVDIVVQVGRSGKITPVAHVEKVLVAGASITNASLHNQDYIDFVGLNVGDIVVISRRGDVIPAVDLVIEKLAVGSFKIPSNCPSCKMTLIKEGAHLFCVNRHCSCRIIEQVKYFCSKKCMNIVGLSEKTIEFLFEKKFISSEVELYTFNCDRLINLKGFNLKRINNLKRSIEDSKSRPFRKLLLGMGIKDLGENTILVLINNNLNSFDTISTLCKNKEAALAKLLKIKGIGERIALNIIEAFNDKTILDKFNFFKELGLKMEEDNTNDAVYDSFLFGKKFCITGSFKGYSRDVLIEKLTKKGAVFSRSVTKCLDFLLVGEKFGLKVQKANNLGIKTFSLFDIKDFVDLDD</sequence>
<keyword id="KW-0227">DNA damage</keyword>
<keyword id="KW-0234">DNA repair</keyword>
<keyword id="KW-0235">DNA replication</keyword>
<keyword id="KW-0436">Ligase</keyword>
<keyword id="KW-0460">Magnesium</keyword>
<keyword id="KW-0464">Manganese</keyword>
<keyword id="KW-0479">Metal-binding</keyword>
<keyword id="KW-0520">NAD</keyword>
<keyword id="KW-0862">Zinc</keyword>
<comment type="function">
    <text evidence="1">DNA ligase that catalyzes the formation of phosphodiester linkages between 5'-phosphoryl and 3'-hydroxyl groups in double-stranded DNA using NAD as a coenzyme and as the energy source for the reaction. It is essential for DNA replication and repair of damaged DNA.</text>
</comment>
<comment type="catalytic activity">
    <reaction evidence="1">
        <text>NAD(+) + (deoxyribonucleotide)n-3'-hydroxyl + 5'-phospho-(deoxyribonucleotide)m = (deoxyribonucleotide)n+m + AMP + beta-nicotinamide D-nucleotide.</text>
        <dbReference type="EC" id="6.5.1.2"/>
    </reaction>
</comment>
<comment type="cofactor">
    <cofactor evidence="1">
        <name>Mg(2+)</name>
        <dbReference type="ChEBI" id="CHEBI:18420"/>
    </cofactor>
    <cofactor evidence="1">
        <name>Mn(2+)</name>
        <dbReference type="ChEBI" id="CHEBI:29035"/>
    </cofactor>
</comment>
<comment type="similarity">
    <text evidence="1">Belongs to the NAD-dependent DNA ligase family. LigA subfamily.</text>
</comment>
<gene>
    <name evidence="1" type="primary">ligA</name>
    <name type="ordered locus">BH0552</name>
</gene>
<feature type="chain" id="PRO_0000380312" description="DNA ligase">
    <location>
        <begin position="1"/>
        <end position="669"/>
    </location>
</feature>
<feature type="active site" description="N6-AMP-lysine intermediate" evidence="1">
    <location>
        <position position="117"/>
    </location>
</feature>
<feature type="binding site" evidence="1">
    <location>
        <begin position="33"/>
        <end position="37"/>
    </location>
    <ligand>
        <name>NAD(+)</name>
        <dbReference type="ChEBI" id="CHEBI:57540"/>
    </ligand>
</feature>
<feature type="binding site" evidence="1">
    <location>
        <begin position="82"/>
        <end position="83"/>
    </location>
    <ligand>
        <name>NAD(+)</name>
        <dbReference type="ChEBI" id="CHEBI:57540"/>
    </ligand>
</feature>
<feature type="binding site" evidence="1">
    <location>
        <position position="115"/>
    </location>
    <ligand>
        <name>NAD(+)</name>
        <dbReference type="ChEBI" id="CHEBI:57540"/>
    </ligand>
</feature>
<feature type="binding site" evidence="1">
    <location>
        <position position="138"/>
    </location>
    <ligand>
        <name>NAD(+)</name>
        <dbReference type="ChEBI" id="CHEBI:57540"/>
    </ligand>
</feature>
<feature type="binding site" evidence="1">
    <location>
        <position position="172"/>
    </location>
    <ligand>
        <name>NAD(+)</name>
        <dbReference type="ChEBI" id="CHEBI:57540"/>
    </ligand>
</feature>
<feature type="binding site" evidence="1">
    <location>
        <position position="286"/>
    </location>
    <ligand>
        <name>NAD(+)</name>
        <dbReference type="ChEBI" id="CHEBI:57540"/>
    </ligand>
</feature>
<feature type="binding site" evidence="1">
    <location>
        <position position="310"/>
    </location>
    <ligand>
        <name>NAD(+)</name>
        <dbReference type="ChEBI" id="CHEBI:57540"/>
    </ligand>
</feature>
<feature type="binding site" evidence="1">
    <location>
        <position position="401"/>
    </location>
    <ligand>
        <name>Zn(2+)</name>
        <dbReference type="ChEBI" id="CHEBI:29105"/>
    </ligand>
</feature>
<feature type="binding site" evidence="1">
    <location>
        <position position="404"/>
    </location>
    <ligand>
        <name>Zn(2+)</name>
        <dbReference type="ChEBI" id="CHEBI:29105"/>
    </ligand>
</feature>
<feature type="binding site" evidence="1">
    <location>
        <position position="417"/>
    </location>
    <ligand>
        <name>Zn(2+)</name>
        <dbReference type="ChEBI" id="CHEBI:29105"/>
    </ligand>
</feature>
<feature type="binding site" evidence="1">
    <location>
        <position position="422"/>
    </location>
    <ligand>
        <name>Zn(2+)</name>
        <dbReference type="ChEBI" id="CHEBI:29105"/>
    </ligand>
</feature>
<evidence type="ECO:0000255" key="1">
    <source>
        <dbReference type="HAMAP-Rule" id="MF_01588"/>
    </source>
</evidence>
<dbReference type="EC" id="6.5.1.2" evidence="1"/>
<dbReference type="EMBL" id="CP000048">
    <property type="protein sequence ID" value="AAX17058.1"/>
    <property type="molecule type" value="Genomic_DNA"/>
</dbReference>
<dbReference type="RefSeq" id="WP_012422309.1">
    <property type="nucleotide sequence ID" value="NZ_CP073136.1"/>
</dbReference>
<dbReference type="SMR" id="B2S0Q2"/>
<dbReference type="KEGG" id="bhr:BH0552"/>
<dbReference type="HOGENOM" id="CLU_007764_2_0_12"/>
<dbReference type="Proteomes" id="UP000008834">
    <property type="component" value="Chromosome"/>
</dbReference>
<dbReference type="GO" id="GO:0003677">
    <property type="term" value="F:DNA binding"/>
    <property type="evidence" value="ECO:0007669"/>
    <property type="project" value="InterPro"/>
</dbReference>
<dbReference type="GO" id="GO:0003911">
    <property type="term" value="F:DNA ligase (NAD+) activity"/>
    <property type="evidence" value="ECO:0007669"/>
    <property type="project" value="UniProtKB-UniRule"/>
</dbReference>
<dbReference type="GO" id="GO:0046872">
    <property type="term" value="F:metal ion binding"/>
    <property type="evidence" value="ECO:0007669"/>
    <property type="project" value="UniProtKB-KW"/>
</dbReference>
<dbReference type="GO" id="GO:0006281">
    <property type="term" value="P:DNA repair"/>
    <property type="evidence" value="ECO:0007669"/>
    <property type="project" value="UniProtKB-KW"/>
</dbReference>
<dbReference type="GO" id="GO:0006260">
    <property type="term" value="P:DNA replication"/>
    <property type="evidence" value="ECO:0007669"/>
    <property type="project" value="UniProtKB-KW"/>
</dbReference>
<dbReference type="CDD" id="cd17748">
    <property type="entry name" value="BRCT_DNA_ligase_like"/>
    <property type="match status" value="1"/>
</dbReference>
<dbReference type="CDD" id="cd00114">
    <property type="entry name" value="LIGANc"/>
    <property type="match status" value="1"/>
</dbReference>
<dbReference type="Gene3D" id="1.10.150.20">
    <property type="entry name" value="5' to 3' exonuclease, C-terminal subdomain"/>
    <property type="match status" value="2"/>
</dbReference>
<dbReference type="Gene3D" id="3.40.50.10190">
    <property type="entry name" value="BRCT domain"/>
    <property type="match status" value="1"/>
</dbReference>
<dbReference type="Gene3D" id="3.30.470.30">
    <property type="entry name" value="DNA ligase/mRNA capping enzyme"/>
    <property type="match status" value="1"/>
</dbReference>
<dbReference type="Gene3D" id="1.10.287.610">
    <property type="entry name" value="Helix hairpin bin"/>
    <property type="match status" value="1"/>
</dbReference>
<dbReference type="Gene3D" id="2.40.50.140">
    <property type="entry name" value="Nucleic acid-binding proteins"/>
    <property type="match status" value="1"/>
</dbReference>
<dbReference type="HAMAP" id="MF_01588">
    <property type="entry name" value="DNA_ligase_A"/>
    <property type="match status" value="1"/>
</dbReference>
<dbReference type="InterPro" id="IPR001357">
    <property type="entry name" value="BRCT_dom"/>
</dbReference>
<dbReference type="InterPro" id="IPR036420">
    <property type="entry name" value="BRCT_dom_sf"/>
</dbReference>
<dbReference type="InterPro" id="IPR001679">
    <property type="entry name" value="DNA_ligase"/>
</dbReference>
<dbReference type="InterPro" id="IPR013839">
    <property type="entry name" value="DNAligase_adenylation"/>
</dbReference>
<dbReference type="InterPro" id="IPR013840">
    <property type="entry name" value="DNAligase_N"/>
</dbReference>
<dbReference type="InterPro" id="IPR003583">
    <property type="entry name" value="Hlx-hairpin-Hlx_DNA-bd_motif"/>
</dbReference>
<dbReference type="InterPro" id="IPR012340">
    <property type="entry name" value="NA-bd_OB-fold"/>
</dbReference>
<dbReference type="InterPro" id="IPR004150">
    <property type="entry name" value="NAD_DNA_ligase_OB"/>
</dbReference>
<dbReference type="InterPro" id="IPR010994">
    <property type="entry name" value="RuvA_2-like"/>
</dbReference>
<dbReference type="NCBIfam" id="TIGR00575">
    <property type="entry name" value="dnlj"/>
    <property type="match status" value="1"/>
</dbReference>
<dbReference type="NCBIfam" id="NF005932">
    <property type="entry name" value="PRK07956.1"/>
    <property type="match status" value="1"/>
</dbReference>
<dbReference type="NCBIfam" id="NF010930">
    <property type="entry name" value="PRK14350.1"/>
    <property type="match status" value="1"/>
</dbReference>
<dbReference type="Pfam" id="PF00533">
    <property type="entry name" value="BRCT"/>
    <property type="match status" value="1"/>
</dbReference>
<dbReference type="Pfam" id="PF01653">
    <property type="entry name" value="DNA_ligase_aden"/>
    <property type="match status" value="1"/>
</dbReference>
<dbReference type="Pfam" id="PF03120">
    <property type="entry name" value="DNA_ligase_OB"/>
    <property type="match status" value="1"/>
</dbReference>
<dbReference type="Pfam" id="PF14520">
    <property type="entry name" value="HHH_5"/>
    <property type="match status" value="1"/>
</dbReference>
<dbReference type="PIRSF" id="PIRSF001604">
    <property type="entry name" value="LigA"/>
    <property type="match status" value="1"/>
</dbReference>
<dbReference type="SMART" id="SM00292">
    <property type="entry name" value="BRCT"/>
    <property type="match status" value="1"/>
</dbReference>
<dbReference type="SMART" id="SM00278">
    <property type="entry name" value="HhH1"/>
    <property type="match status" value="3"/>
</dbReference>
<dbReference type="SMART" id="SM00532">
    <property type="entry name" value="LIGANc"/>
    <property type="match status" value="1"/>
</dbReference>
<dbReference type="SUPFAM" id="SSF52113">
    <property type="entry name" value="BRCT domain"/>
    <property type="match status" value="1"/>
</dbReference>
<dbReference type="SUPFAM" id="SSF56091">
    <property type="entry name" value="DNA ligase/mRNA capping enzyme, catalytic domain"/>
    <property type="match status" value="1"/>
</dbReference>
<dbReference type="SUPFAM" id="SSF50249">
    <property type="entry name" value="Nucleic acid-binding proteins"/>
    <property type="match status" value="1"/>
</dbReference>
<dbReference type="SUPFAM" id="SSF47781">
    <property type="entry name" value="RuvA domain 2-like"/>
    <property type="match status" value="1"/>
</dbReference>
<protein>
    <recommendedName>
        <fullName evidence="1">DNA ligase</fullName>
        <ecNumber evidence="1">6.5.1.2</ecNumber>
    </recommendedName>
    <alternativeName>
        <fullName evidence="1">Polydeoxyribonucleotide synthase [NAD(+)]</fullName>
    </alternativeName>
</protein>
<name>DNLJ_BORHD</name>
<accession>B2S0Q2</accession>